<dbReference type="EMBL" id="AC245088">
    <property type="status" value="NOT_ANNOTATED_CDS"/>
    <property type="molecule type" value="Genomic_DNA"/>
</dbReference>
<dbReference type="SMR" id="A0A075B6L6"/>
<dbReference type="FunCoup" id="A0A075B6L6">
    <property type="interactions" value="511"/>
</dbReference>
<dbReference type="BioMuta" id="TRBV7-3"/>
<dbReference type="MassIVE" id="A0A075B6L6"/>
<dbReference type="Ensembl" id="ENST00000390361.3">
    <property type="protein sequence ID" value="ENSP00000374884.3"/>
    <property type="gene ID" value="ENSG00000211714.3"/>
</dbReference>
<dbReference type="UCSC" id="uc033ako.2">
    <property type="organism name" value="human"/>
</dbReference>
<dbReference type="AGR" id="HGNC:12237"/>
<dbReference type="GeneCards" id="TRBV7-3"/>
<dbReference type="HGNC" id="HGNC:12237">
    <property type="gene designation" value="TRBV7-3"/>
</dbReference>
<dbReference type="HPA" id="ENSG00000211714">
    <property type="expression patterns" value="Tissue enriched (lymphoid)"/>
</dbReference>
<dbReference type="neXtProt" id="NX_A0A075B6L6"/>
<dbReference type="OpenTargets" id="ENSG00000211714"/>
<dbReference type="VEuPathDB" id="HostDB:ENSG00000211714"/>
<dbReference type="GeneTree" id="ENSGT00940000154460"/>
<dbReference type="HOGENOM" id="CLU_077975_9_4_1"/>
<dbReference type="InParanoid" id="A0A075B6L6"/>
<dbReference type="OMA" id="CHPISTH"/>
<dbReference type="OrthoDB" id="9536814at2759"/>
<dbReference type="PAN-GO" id="A0A075B6L6">
    <property type="GO annotations" value="2 GO annotations based on evolutionary models"/>
</dbReference>
<dbReference type="SignaLink" id="A0A075B6L6"/>
<dbReference type="ChiTaRS" id="TRBV7-3">
    <property type="organism name" value="human"/>
</dbReference>
<dbReference type="PRO" id="PR:A0A075B6L6"/>
<dbReference type="Proteomes" id="UP000005640">
    <property type="component" value="Chromosome 7"/>
</dbReference>
<dbReference type="RNAct" id="A0A075B6L6">
    <property type="molecule type" value="protein"/>
</dbReference>
<dbReference type="Bgee" id="ENSG00000211714">
    <property type="expression patterns" value="Expressed in male germ line stem cell (sensu Vertebrata) in testis and 82 other cell types or tissues"/>
</dbReference>
<dbReference type="GO" id="GO:0005886">
    <property type="term" value="C:plasma membrane"/>
    <property type="evidence" value="ECO:0000318"/>
    <property type="project" value="GO_Central"/>
</dbReference>
<dbReference type="GO" id="GO:0042101">
    <property type="term" value="C:T cell receptor complex"/>
    <property type="evidence" value="ECO:0007669"/>
    <property type="project" value="UniProtKB-KW"/>
</dbReference>
<dbReference type="GO" id="GO:0002250">
    <property type="term" value="P:adaptive immune response"/>
    <property type="evidence" value="ECO:0007669"/>
    <property type="project" value="UniProtKB-KW"/>
</dbReference>
<dbReference type="GO" id="GO:0007166">
    <property type="term" value="P:cell surface receptor signaling pathway"/>
    <property type="evidence" value="ECO:0000318"/>
    <property type="project" value="GO_Central"/>
</dbReference>
<dbReference type="Gene3D" id="2.60.40.10">
    <property type="entry name" value="Immunoglobulins"/>
    <property type="match status" value="1"/>
</dbReference>
<dbReference type="InterPro" id="IPR036179">
    <property type="entry name" value="Ig-like_dom_sf"/>
</dbReference>
<dbReference type="InterPro" id="IPR013783">
    <property type="entry name" value="Ig-like_fold"/>
</dbReference>
<dbReference type="InterPro" id="IPR013106">
    <property type="entry name" value="Ig_V-set"/>
</dbReference>
<dbReference type="InterPro" id="IPR050413">
    <property type="entry name" value="TCR_beta_variable"/>
</dbReference>
<dbReference type="PANTHER" id="PTHR23268:SF105">
    <property type="entry name" value="NON-FUNCTIONAL T CELL RECEPTOR BETA VARIABLE 7-3-RELATED"/>
    <property type="match status" value="1"/>
</dbReference>
<dbReference type="PANTHER" id="PTHR23268">
    <property type="entry name" value="T-CELL RECEPTOR BETA CHAIN"/>
    <property type="match status" value="1"/>
</dbReference>
<dbReference type="Pfam" id="PF07686">
    <property type="entry name" value="V-set"/>
    <property type="match status" value="1"/>
</dbReference>
<dbReference type="SUPFAM" id="SSF48726">
    <property type="entry name" value="Immunoglobulin"/>
    <property type="match status" value="1"/>
</dbReference>
<protein>
    <recommendedName>
        <fullName evidence="11">Probable non-functional T cell receptor beta variable 7-3</fullName>
    </recommendedName>
</protein>
<organism>
    <name type="scientific">Homo sapiens</name>
    <name type="common">Human</name>
    <dbReference type="NCBI Taxonomy" id="9606"/>
    <lineage>
        <taxon>Eukaryota</taxon>
        <taxon>Metazoa</taxon>
        <taxon>Chordata</taxon>
        <taxon>Craniata</taxon>
        <taxon>Vertebrata</taxon>
        <taxon>Euteleostomi</taxon>
        <taxon>Mammalia</taxon>
        <taxon>Eutheria</taxon>
        <taxon>Euarchontoglires</taxon>
        <taxon>Primates</taxon>
        <taxon>Haplorrhini</taxon>
        <taxon>Catarrhini</taxon>
        <taxon>Hominidae</taxon>
        <taxon>Homo</taxon>
    </lineage>
</organism>
<keyword id="KW-1064">Adaptive immunity</keyword>
<keyword id="KW-1003">Cell membrane</keyword>
<keyword id="KW-0391">Immunity</keyword>
<keyword id="KW-0393">Immunoglobulin domain</keyword>
<keyword id="KW-0472">Membrane</keyword>
<keyword id="KW-0675">Receptor</keyword>
<keyword id="KW-1185">Reference proteome</keyword>
<keyword id="KW-0732">Signal</keyword>
<keyword id="KW-1279">T cell receptor</keyword>
<name>TVB73_HUMAN</name>
<proteinExistence type="evidence at protein level"/>
<comment type="function">
    <text evidence="3 4 6 7 8">Probable non-functional open reading frame (ORF) of V region of the variable domain of T cell receptor (TR) beta chain (PubMed:24600447). Non-functional ORF generally cannot participate in the synthesis of a productive T cell receptor (TR) chain due to altered V-(D)-J or switch recombination and/or splicing site (at mRNA level) and/or conserved amino acid change (protein level) (PubMed:9619395). Alpha-beta T cell receptors are antigen specific receptors which are essential to the immune response and are present on the cell surface of T lymphocytes. Recognize peptide-major histocompatibility (MH) (pMH) complexes that are displayed by antigen presenting cells (APC), a prerequisite for efficient T cell adaptive immunity against pathogens (PubMed:25493333). Binding of alpha-beta TR to pMH complex initiates TR-CD3 clustering on the cell surface and intracellular activation of LCK that phosphorylates the ITAM motifs of CD3G, CD3D, CD3E and CD247 enabling the recruitment of ZAP70. In turn ZAP70 phosphorylates LAT, which recruits numerous signaling molecules to form the LAT signalosome. The LAT signalosome propagates signal branching to three major signaling pathways, the calcium, the mitogen-activated protein kinase (MAPK) kinase and the nuclear factor NF-kappa-B (NF-kB) pathways, leading to the mobilization of transcription factors that are critical for gene expression and essential for T cell growth and differentiation (PubMed:23524462). The T cell repertoire is generated in the thymus, by V-(D)-J rearrangement. This repertoire is then shaped by intrathymic selection events to generate a peripheral T cell pool of self-MH restricted, non-autoaggressive T cells. Post-thymic interaction of alpha-beta TR with the pMH complexes shapes TR structural and functional avidity (PubMed:15040585).</text>
</comment>
<comment type="subunit">
    <text evidence="5 11">Most probably, the alpha-beta TR is not assembled due to incorrect folding of the beta chain (Probable). Alpha-beta TR is a heterodimer composed of an alpha and beta chain; disulfide-linked. The alpha-beta TR is associated with the transmembrane signaling CD3 coreceptor proteins to form the TR-CD3 (TcR or TCR). The assembly of alpha-beta TR heterodimers with CD3 occurs in the endoplasmic reticulum where a single alpha-beta TR heterodimer associates with one CD3D-CD3E heterodimer, one CD3G-CD3E heterodimer and one CD247 homodimer forming a stable octameric structure. CD3D-CD3E and CD3G-CD3E heterodimers preferentially associate with TR alpha and TR beta chains, respectively. The association of the CD247 homodimer is the last step of TcR assembly in the endoplasmic reticulum and is required for transport to the cell surface.</text>
</comment>
<comment type="subcellular location">
    <subcellularLocation>
        <location evidence="5">Cell membrane</location>
    </subcellularLocation>
</comment>
<comment type="polymorphism">
    <text evidence="11">There are several alleles. The sequence shown is that of IMGT allele TRBV7-3*03.</text>
</comment>
<comment type="caution">
    <text evidence="9 11">Most probably a non-functional protein that cannot participate to the synthesis of a productive T cell receptor (TR) chain due to a mutation at position 111, corresponding to the second cysteine from the disulfide bridge, potentially leading to uncorrect folding (PubMed:9619395).</text>
</comment>
<evidence type="ECO:0000255" key="1"/>
<evidence type="ECO:0000255" key="2">
    <source>
        <dbReference type="PROSITE-ProRule" id="PRU00114"/>
    </source>
</evidence>
<evidence type="ECO:0000269" key="3">
    <source>
    </source>
</evidence>
<evidence type="ECO:0000303" key="4">
    <source>
    </source>
</evidence>
<evidence type="ECO:0000303" key="5">
    <source>
    </source>
</evidence>
<evidence type="ECO:0000303" key="6">
    <source>
    </source>
</evidence>
<evidence type="ECO:0000303" key="7">
    <source>
    </source>
</evidence>
<evidence type="ECO:0000303" key="8">
    <source>
    </source>
</evidence>
<evidence type="ECO:0000303" key="9">
    <source>
    </source>
</evidence>
<evidence type="ECO:0000303" key="10">
    <source ref="3"/>
</evidence>
<evidence type="ECO:0000305" key="11"/>
<evidence type="ECO:0000312" key="12">
    <source>
        <dbReference type="HGNC" id="HGNC:12237"/>
    </source>
</evidence>
<reference key="1">
    <citation type="journal article" date="2003" name="Nature">
        <title>The DNA sequence of human chromosome 7.</title>
        <authorList>
            <person name="Hillier L.W."/>
            <person name="Fulton R.S."/>
            <person name="Fulton L.A."/>
            <person name="Graves T.A."/>
            <person name="Pepin K.H."/>
            <person name="Wagner-McPherson C."/>
            <person name="Layman D."/>
            <person name="Maas J."/>
            <person name="Jaeger S."/>
            <person name="Walker R."/>
            <person name="Wylie K."/>
            <person name="Sekhon M."/>
            <person name="Becker M.C."/>
            <person name="O'Laughlin M.D."/>
            <person name="Schaller M.E."/>
            <person name="Fewell G.A."/>
            <person name="Delehaunty K.D."/>
            <person name="Miner T.L."/>
            <person name="Nash W.E."/>
            <person name="Cordes M."/>
            <person name="Du H."/>
            <person name="Sun H."/>
            <person name="Edwards J."/>
            <person name="Bradshaw-Cordum H."/>
            <person name="Ali J."/>
            <person name="Andrews S."/>
            <person name="Isak A."/>
            <person name="Vanbrunt A."/>
            <person name="Nguyen C."/>
            <person name="Du F."/>
            <person name="Lamar B."/>
            <person name="Courtney L."/>
            <person name="Kalicki J."/>
            <person name="Ozersky P."/>
            <person name="Bielicki L."/>
            <person name="Scott K."/>
            <person name="Holmes A."/>
            <person name="Harkins R."/>
            <person name="Harris A."/>
            <person name="Strong C.M."/>
            <person name="Hou S."/>
            <person name="Tomlinson C."/>
            <person name="Dauphin-Kohlberg S."/>
            <person name="Kozlowicz-Reilly A."/>
            <person name="Leonard S."/>
            <person name="Rohlfing T."/>
            <person name="Rock S.M."/>
            <person name="Tin-Wollam A.-M."/>
            <person name="Abbott A."/>
            <person name="Minx P."/>
            <person name="Maupin R."/>
            <person name="Strowmatt C."/>
            <person name="Latreille P."/>
            <person name="Miller N."/>
            <person name="Johnson D."/>
            <person name="Murray J."/>
            <person name="Woessner J.P."/>
            <person name="Wendl M.C."/>
            <person name="Yang S.-P."/>
            <person name="Schultz B.R."/>
            <person name="Wallis J.W."/>
            <person name="Spieth J."/>
            <person name="Bieri T.A."/>
            <person name="Nelson J.O."/>
            <person name="Berkowicz N."/>
            <person name="Wohldmann P.E."/>
            <person name="Cook L.L."/>
            <person name="Hickenbotham M.T."/>
            <person name="Eldred J."/>
            <person name="Williams D."/>
            <person name="Bedell J.A."/>
            <person name="Mardis E.R."/>
            <person name="Clifton S.W."/>
            <person name="Chissoe S.L."/>
            <person name="Marra M.A."/>
            <person name="Raymond C."/>
            <person name="Haugen E."/>
            <person name="Gillett W."/>
            <person name="Zhou Y."/>
            <person name="James R."/>
            <person name="Phelps K."/>
            <person name="Iadanoto S."/>
            <person name="Bubb K."/>
            <person name="Simms E."/>
            <person name="Levy R."/>
            <person name="Clendenning J."/>
            <person name="Kaul R."/>
            <person name="Kent W.J."/>
            <person name="Furey T.S."/>
            <person name="Baertsch R.A."/>
            <person name="Brent M.R."/>
            <person name="Keibler E."/>
            <person name="Flicek P."/>
            <person name="Bork P."/>
            <person name="Suyama M."/>
            <person name="Bailey J.A."/>
            <person name="Portnoy M.E."/>
            <person name="Torrents D."/>
            <person name="Chinwalla A.T."/>
            <person name="Gish W.R."/>
            <person name="Eddy S.R."/>
            <person name="McPherson J.D."/>
            <person name="Olson M.V."/>
            <person name="Eichler E.E."/>
            <person name="Green E.D."/>
            <person name="Waterston R.H."/>
            <person name="Wilson R.K."/>
        </authorList>
    </citation>
    <scope>NUCLEOTIDE SEQUENCE [LARGE SCALE GENOMIC DNA] (IMGT ALLELE TRBV7-3*03)</scope>
</reference>
<reference key="2">
    <citation type="journal article" date="1998" name="Exp. Clin. Immunogenet.">
        <title>IMGT (ImMunoGeneTics) locus on focus. A new section of Experimental and Clinical Immunogenetics.</title>
        <authorList>
            <person name="Lefranc M.P."/>
        </authorList>
    </citation>
    <scope>CHARACTERIZATION</scope>
</reference>
<reference key="3">
    <citation type="book" date="2001" name="The T Cell Receptor FactsBook.">
        <title>The T Cell Receptor FactsBook.</title>
        <editorList>
            <person name="Lefranc M.P."/>
            <person name="Lefranc G."/>
        </editorList>
        <authorList>
            <person name="Lefranc M.P."/>
            <person name="Lefranc G."/>
        </authorList>
    </citation>
    <scope>NOMENCLATURE</scope>
</reference>
<reference key="4">
    <citation type="journal article" date="2004" name="Nat. Rev. Immunol.">
        <title>The many important facets of T-cell repertoire diversity.</title>
        <authorList>
            <person name="Nikolich-Zugich J."/>
            <person name="Slifka M.K."/>
            <person name="Messaoudi I."/>
        </authorList>
    </citation>
    <scope>REVIEW ON T CELL REPERTOIRE DIVERSITY</scope>
</reference>
<reference key="5">
    <citation type="journal article" date="2010" name="Cold Spring Harb. Perspect. Biol.">
        <title>Structural biology of the T-cell receptor: insights into receptor assembly, ligand recognition, and initiation of signaling.</title>
        <authorList>
            <person name="Wucherpfennig K.W."/>
            <person name="Gagnon E."/>
            <person name="Call M.J."/>
            <person name="Huseby E.S."/>
            <person name="Call M.E."/>
        </authorList>
    </citation>
    <scope>REVIEW ON T CELL RECEPTOR-CD3 COMPLEX ASSEMBLY</scope>
    <scope>SUBCELLULAR LOCATION</scope>
</reference>
<reference key="6">
    <citation type="journal article" date="2013" name="Nat. Rev. Immunol.">
        <title>T cell receptor signalling networks: branched, diversified and bounded.</title>
        <authorList>
            <person name="Brownlie R.J."/>
            <person name="Zamoyska R."/>
        </authorList>
    </citation>
    <scope>REVIEW ON T CELL RECEPTOR SIGNALING</scope>
</reference>
<reference key="7">
    <citation type="journal article" date="2014" name="Front. Immunol.">
        <title>Immunoglobulin and T Cell Receptor Genes: IMGT((R)) and the Birth and Rise of Immunoinformatics.</title>
        <authorList>
            <person name="Lefranc M.P."/>
        </authorList>
    </citation>
    <scope>NOMENCLATURE</scope>
</reference>
<reference key="8">
    <citation type="journal article" date="2015" name="Annu. Rev. Immunol.">
        <title>T cell antigen receptor recognition of antigen-presenting molecules.</title>
        <authorList>
            <person name="Rossjohn J."/>
            <person name="Gras S."/>
            <person name="Miles J.J."/>
            <person name="Turner S.J."/>
            <person name="Godfrey D.I."/>
            <person name="McCluskey J."/>
        </authorList>
    </citation>
    <scope>REVIEW ON FUNCTION</scope>
</reference>
<accession>A0A075B6L6</accession>
<sequence>MGTRLLCWAALCLLGADHTGAGVSQTPSNKVTEKGKDVELRCDPISGHTALYWYRQSLGQGPEFLIYFQGTGAADDSGLPKDRFFAVRPEGSVSTLKIQRTEQGDSAAYLRASSL</sequence>
<gene>
    <name evidence="10 12" type="primary">TRBV7-3</name>
</gene>
<feature type="signal peptide" evidence="1">
    <location>
        <begin position="1"/>
        <end position="21"/>
    </location>
</feature>
<feature type="chain" id="PRO_5008197245" description="Probable non-functional T cell receptor beta variable 7-3" evidence="1">
    <location>
        <begin position="22"/>
        <end position="115"/>
    </location>
</feature>
<feature type="domain" description="Ig-like" evidence="2">
    <location>
        <begin position="22"/>
        <end position="115" status="greater than"/>
    </location>
</feature>
<feature type="non-terminal residue">
    <location>
        <position position="115"/>
    </location>
</feature>